<organism>
    <name type="scientific">Bat coronavirus Rp3/2004</name>
    <name type="common">BtCoV/Rp3/2004</name>
    <name type="synonym">SARS-like coronavirus Rp3</name>
    <dbReference type="NCBI Taxonomy" id="349344"/>
    <lineage>
        <taxon>Viruses</taxon>
        <taxon>Riboviria</taxon>
        <taxon>Orthornavirae</taxon>
        <taxon>Pisuviricota</taxon>
        <taxon>Pisoniviricetes</taxon>
        <taxon>Nidovirales</taxon>
        <taxon>Cornidovirineae</taxon>
        <taxon>Coronaviridae</taxon>
        <taxon>Orthocoronavirinae</taxon>
        <taxon>Betacoronavirus</taxon>
        <taxon>Sarbecovirus</taxon>
        <taxon>Severe acute respiratory syndrome coronavirus</taxon>
    </lineage>
</organism>
<gene>
    <name type="ORF">7b</name>
</gene>
<name>NS7B_BCRP3</name>
<dbReference type="EMBL" id="DQ071615">
    <property type="protein sequence ID" value="AAZ67058.1"/>
    <property type="molecule type" value="Genomic_RNA"/>
</dbReference>
<dbReference type="SMR" id="Q3I5I9"/>
<dbReference type="Proteomes" id="UP000006570">
    <property type="component" value="Genome"/>
</dbReference>
<dbReference type="GO" id="GO:0033644">
    <property type="term" value="C:host cell membrane"/>
    <property type="evidence" value="ECO:0007669"/>
    <property type="project" value="UniProtKB-SubCell"/>
</dbReference>
<dbReference type="GO" id="GO:0016020">
    <property type="term" value="C:membrane"/>
    <property type="evidence" value="ECO:0007669"/>
    <property type="project" value="UniProtKB-KW"/>
</dbReference>
<dbReference type="CDD" id="cd21635">
    <property type="entry name" value="ORF7b_SARS-CoV-like"/>
    <property type="match status" value="1"/>
</dbReference>
<dbReference type="InterPro" id="IPR021532">
    <property type="entry name" value="NS7B_bCoV"/>
</dbReference>
<dbReference type="InterPro" id="IPR044394">
    <property type="entry name" value="ORF7b_SARS-CoV-like"/>
</dbReference>
<dbReference type="Pfam" id="PF11395">
    <property type="entry name" value="bCoV_NS7B"/>
    <property type="match status" value="1"/>
</dbReference>
<keyword id="KW-1043">Host membrane</keyword>
<keyword id="KW-0472">Membrane</keyword>
<keyword id="KW-0812">Transmembrane</keyword>
<keyword id="KW-1133">Transmembrane helix</keyword>
<sequence>MNELTLIDFYLCFLAFLLFLVLIMLIIFWFSLELQDIEEPCNKV</sequence>
<feature type="chain" id="PRO_0000106138" description="Non-structural protein 7b">
    <location>
        <begin position="1"/>
        <end position="44"/>
    </location>
</feature>
<feature type="transmembrane region" description="Helical" evidence="1">
    <location>
        <begin position="9"/>
        <end position="29"/>
    </location>
</feature>
<comment type="subcellular location">
    <subcellularLocation>
        <location evidence="2">Host membrane</location>
        <topology evidence="2">Single-pass membrane protein</topology>
    </subcellularLocation>
</comment>
<comment type="miscellaneous">
    <text>Bat coronavirus rp3 is highly similar to SARS-CoV (SARS-like).</text>
</comment>
<protein>
    <recommendedName>
        <fullName>Non-structural protein 7b</fullName>
        <shortName>ns7b</shortName>
    </recommendedName>
    <alternativeName>
        <fullName>Accessory protein 7b</fullName>
    </alternativeName>
</protein>
<organismHost>
    <name type="scientific">Rhinolophus ferrumequinum</name>
    <name type="common">Greater horseshoe bat</name>
    <dbReference type="NCBI Taxonomy" id="59479"/>
</organismHost>
<organismHost>
    <name type="scientific">Rhinolophus macrotis</name>
    <name type="common">Big-eared horseshoe bat</name>
    <dbReference type="NCBI Taxonomy" id="196889"/>
</organismHost>
<organismHost>
    <name type="scientific">Rhinolophus pearsonii</name>
    <dbReference type="NCBI Taxonomy" id="188571"/>
</organismHost>
<organismHost>
    <name type="scientific">Rhinolophus sinicus</name>
    <name type="common">Chinese rufous horseshoe bat</name>
    <dbReference type="NCBI Taxonomy" id="89399"/>
</organismHost>
<proteinExistence type="predicted"/>
<accession>Q3I5I9</accession>
<evidence type="ECO:0000255" key="1"/>
<evidence type="ECO:0000305" key="2"/>
<reference key="1">
    <citation type="journal article" date="2005" name="Science">
        <title>Bats are natural reservoirs of SARS-like coronaviruses.</title>
        <authorList>
            <person name="Li W."/>
            <person name="Shi Z."/>
            <person name="Yu M."/>
            <person name="Ren W."/>
            <person name="Smith C."/>
            <person name="Epstein J.H."/>
            <person name="Wang H."/>
            <person name="Crameri G."/>
            <person name="Hu Z."/>
            <person name="Zhang H."/>
            <person name="Zhang J."/>
            <person name="McEachern J."/>
            <person name="Field H."/>
            <person name="Daszak P."/>
            <person name="Eaton B.T."/>
            <person name="Zhang S."/>
            <person name="Wang L.F."/>
        </authorList>
    </citation>
    <scope>NUCLEOTIDE SEQUENCE [GENOMIC RNA]</scope>
</reference>